<sequence>MQRQRGFTLLEIMVVIVILGVLASLVVPNLMGNKEKADRQKVVSDLVALEGALDMYKLDNSRYPTTEQGLQALVSAPSAEPHARNYPEGGYIRRLPQDPWGSDYQLLSPGQHGQVDIFSLGPDGVPESNDDIGNWTIGKK</sequence>
<keyword id="KW-0002">3D-structure</keyword>
<keyword id="KW-0997">Cell inner membrane</keyword>
<keyword id="KW-1003">Cell membrane</keyword>
<keyword id="KW-0472">Membrane</keyword>
<keyword id="KW-0488">Methylation</keyword>
<keyword id="KW-0653">Protein transport</keyword>
<keyword id="KW-0812">Transmembrane</keyword>
<keyword id="KW-1133">Transmembrane helix</keyword>
<keyword id="KW-0813">Transport</keyword>
<gene>
    <name type="primary">pulG</name>
</gene>
<name>GSPG_KLEPN</name>
<accession>P15746</accession>
<feature type="propeptide" id="PRO_0000449508" description="Leader sequence" evidence="3">
    <location>
        <begin position="1"/>
        <end position="6"/>
    </location>
</feature>
<feature type="chain" id="PRO_0000024207" description="Type II secretion system core protein G">
    <location>
        <begin position="7"/>
        <end position="140"/>
    </location>
</feature>
<feature type="transmembrane region" description="Helical" evidence="2">
    <location>
        <begin position="7"/>
        <end position="27"/>
    </location>
</feature>
<feature type="region of interest" description="Disordered" evidence="4">
    <location>
        <begin position="120"/>
        <end position="140"/>
    </location>
</feature>
<feature type="modified residue" description="N-methylphenylalanine" evidence="3">
    <location>
        <position position="7"/>
    </location>
</feature>
<feature type="helix" evidence="6">
    <location>
        <begin position="33"/>
        <end position="60"/>
    </location>
</feature>
<feature type="turn" evidence="6">
    <location>
        <begin position="66"/>
        <end position="68"/>
    </location>
</feature>
<feature type="helix" evidence="6">
    <location>
        <begin position="70"/>
        <end position="73"/>
    </location>
</feature>
<feature type="strand" evidence="6">
    <location>
        <begin position="78"/>
        <end position="81"/>
    </location>
</feature>
<feature type="turn" evidence="6">
    <location>
        <begin position="88"/>
        <end position="91"/>
    </location>
</feature>
<feature type="strand" evidence="6">
    <location>
        <begin position="92"/>
        <end position="94"/>
    </location>
</feature>
<feature type="strand" evidence="6">
    <location>
        <begin position="105"/>
        <end position="107"/>
    </location>
</feature>
<feature type="helix" evidence="6">
    <location>
        <begin position="111"/>
        <end position="113"/>
    </location>
</feature>
<feature type="strand" evidence="6">
    <location>
        <begin position="116"/>
        <end position="119"/>
    </location>
</feature>
<feature type="strand" evidence="6">
    <location>
        <begin position="122"/>
        <end position="124"/>
    </location>
</feature>
<feature type="strand" evidence="6">
    <location>
        <begin position="127"/>
        <end position="129"/>
    </location>
</feature>
<feature type="strand" evidence="6">
    <location>
        <begin position="135"/>
        <end position="137"/>
    </location>
</feature>
<proteinExistence type="evidence at protein level"/>
<dbReference type="EMBL" id="M32613">
    <property type="protein sequence ID" value="AAA25129.1"/>
    <property type="molecule type" value="Genomic_DNA"/>
</dbReference>
<dbReference type="PDB" id="1T92">
    <property type="method" value="X-ray"/>
    <property type="resolution" value="1.60 A"/>
    <property type="chains" value="A/B=31-138"/>
</dbReference>
<dbReference type="PDBsum" id="1T92"/>
<dbReference type="SMR" id="P15746"/>
<dbReference type="TCDB" id="3.A.15.1.1">
    <property type="family name" value="the outer membrane protein secreting main terminal branch (mtb) family"/>
</dbReference>
<dbReference type="EvolutionaryTrace" id="P15746"/>
<dbReference type="GO" id="GO:0005886">
    <property type="term" value="C:plasma membrane"/>
    <property type="evidence" value="ECO:0007669"/>
    <property type="project" value="UniProtKB-SubCell"/>
</dbReference>
<dbReference type="GO" id="GO:0015627">
    <property type="term" value="C:type II protein secretion system complex"/>
    <property type="evidence" value="ECO:0007669"/>
    <property type="project" value="InterPro"/>
</dbReference>
<dbReference type="GO" id="GO:0015628">
    <property type="term" value="P:protein secretion by the type II secretion system"/>
    <property type="evidence" value="ECO:0007669"/>
    <property type="project" value="InterPro"/>
</dbReference>
<dbReference type="Gene3D" id="3.30.700.10">
    <property type="entry name" value="Glycoprotein, Type 4 Pilin"/>
    <property type="match status" value="1"/>
</dbReference>
<dbReference type="InterPro" id="IPR000983">
    <property type="entry name" value="Bac_GSPG_pilin"/>
</dbReference>
<dbReference type="InterPro" id="IPR012902">
    <property type="entry name" value="N_methyl_site"/>
</dbReference>
<dbReference type="InterPro" id="IPR045584">
    <property type="entry name" value="Pilin-like"/>
</dbReference>
<dbReference type="InterPro" id="IPR013545">
    <property type="entry name" value="T2SS_protein-GspG_C"/>
</dbReference>
<dbReference type="InterPro" id="IPR050470">
    <property type="entry name" value="T4P/T2SS_Core"/>
</dbReference>
<dbReference type="InterPro" id="IPR010054">
    <property type="entry name" value="Type2_sec_GspG"/>
</dbReference>
<dbReference type="NCBIfam" id="TIGR02532">
    <property type="entry name" value="IV_pilin_GFxxxE"/>
    <property type="match status" value="1"/>
</dbReference>
<dbReference type="NCBIfam" id="TIGR01710">
    <property type="entry name" value="typeII_sec_gspG"/>
    <property type="match status" value="1"/>
</dbReference>
<dbReference type="PANTHER" id="PTHR30093">
    <property type="entry name" value="GENERAL SECRETION PATHWAY PROTEIN G"/>
    <property type="match status" value="1"/>
</dbReference>
<dbReference type="PANTHER" id="PTHR30093:SF44">
    <property type="entry name" value="TYPE II SECRETION SYSTEM CORE PROTEIN G"/>
    <property type="match status" value="1"/>
</dbReference>
<dbReference type="Pfam" id="PF07963">
    <property type="entry name" value="N_methyl"/>
    <property type="match status" value="1"/>
</dbReference>
<dbReference type="Pfam" id="PF08334">
    <property type="entry name" value="T2SSG"/>
    <property type="match status" value="1"/>
</dbReference>
<dbReference type="PRINTS" id="PR00813">
    <property type="entry name" value="BCTERIALGSPG"/>
</dbReference>
<dbReference type="SUPFAM" id="SSF54523">
    <property type="entry name" value="Pili subunits"/>
    <property type="match status" value="1"/>
</dbReference>
<dbReference type="PROSITE" id="PS00409">
    <property type="entry name" value="PROKAR_NTER_METHYL"/>
    <property type="match status" value="1"/>
</dbReference>
<protein>
    <recommendedName>
        <fullName>Type II secretion system core protein G</fullName>
        <shortName>T2SS core protein G</shortName>
    </recommendedName>
    <alternativeName>
        <fullName>General secretion pathway protein G</fullName>
    </alternativeName>
    <alternativeName>
        <fullName>Pullulanase secretion protein PulG</fullName>
    </alternativeName>
</protein>
<evidence type="ECO:0000250" key="1">
    <source>
        <dbReference type="UniProtKB" id="Q00514"/>
    </source>
</evidence>
<evidence type="ECO:0000255" key="2"/>
<evidence type="ECO:0000255" key="3">
    <source>
        <dbReference type="PROSITE-ProRule" id="PRU01070"/>
    </source>
</evidence>
<evidence type="ECO:0000256" key="4">
    <source>
        <dbReference type="SAM" id="MobiDB-lite"/>
    </source>
</evidence>
<evidence type="ECO:0000305" key="5"/>
<evidence type="ECO:0007829" key="6">
    <source>
        <dbReference type="PDB" id="1T92"/>
    </source>
</evidence>
<comment type="function">
    <text evidence="1">Core component of the type II secretion system required for the energy-dependent secretion of extracellular factors such as proteases and toxins from the periplasm. Pseudopilin (pilin-like) protein that polymerizes to form the pseudopilus. Further polymerization triggers pseudopilus growth.</text>
</comment>
<comment type="subunit">
    <text evidence="1">Type II secretion system is composed of four main components: the outer membrane complex, the inner membrane complex, the cytoplasmic secretion ATPase and the periplasm-spanning pseudopilus. Forms homomultimers.</text>
</comment>
<comment type="subcellular location">
    <subcellularLocation>
        <location evidence="1">Cell inner membrane</location>
        <topology evidence="2">Single-pass membrane protein</topology>
    </subcellularLocation>
</comment>
<comment type="PTM">
    <text evidence="1">Cleaved by the prepilin peptidase.</text>
</comment>
<comment type="PTM">
    <text evidence="1">Methylated by prepilin peptidase at the amino group of the N-terminal phenylalanine once the leader sequence is cleaved.</text>
</comment>
<comment type="similarity">
    <text evidence="5">Belongs to the GSP G family.</text>
</comment>
<organism>
    <name type="scientific">Klebsiella pneumoniae</name>
    <dbReference type="NCBI Taxonomy" id="573"/>
    <lineage>
        <taxon>Bacteria</taxon>
        <taxon>Pseudomonadati</taxon>
        <taxon>Pseudomonadota</taxon>
        <taxon>Gammaproteobacteria</taxon>
        <taxon>Enterobacterales</taxon>
        <taxon>Enterobacteriaceae</taxon>
        <taxon>Klebsiella/Raoultella group</taxon>
        <taxon>Klebsiella</taxon>
        <taxon>Klebsiella pneumoniae complex</taxon>
    </lineage>
</organism>
<reference key="1">
    <citation type="journal article" date="1990" name="Mol. Gen. Genet.">
        <title>Five additional genes in the pulC-O operon of the Gram-negative bacterium Klebsiella oxytoca UNF5023 which are required for pullulanase secretion.</title>
        <authorList>
            <person name="Reyss I."/>
            <person name="Pugsley A.P."/>
        </authorList>
    </citation>
    <scope>NUCLEOTIDE SEQUENCE [GENOMIC DNA]</scope>
    <source>
        <strain>UNF 5023</strain>
    </source>
</reference>